<keyword id="KW-0648">Protein biosynthesis</keyword>
<keyword id="KW-0808">Transferase</keyword>
<accession>A8FJQ3</accession>
<proteinExistence type="inferred from homology"/>
<sequence>MKKIIFMGTPSYATCILKALVENENFKLVALFTQPDKAVGRKQILTPSDTKAFLSQNYPSIPIFTPSSLKDENIIREIKDLNPDFIVVAAYGKILPKAILDLAPCVNLHASLLPKYRGASPIQSAILNKDEKSGVCTMLMEEGLDTGAVLESLECDIKDKNSSEVFELLANLAAKLILSTLLNFDKIIPKKQEESLATLCRKIKKEDGLINLQNARELYQKYLAFTPWPGVFLENGLKFLELELVDELKQNARMGEILELEKESFLLACKQGVLRIKKLQESGKKALDGRTYLNGKRLKSEDSLC</sequence>
<evidence type="ECO:0000255" key="1">
    <source>
        <dbReference type="HAMAP-Rule" id="MF_00182"/>
    </source>
</evidence>
<name>FMT_CAMJ8</name>
<reference key="1">
    <citation type="journal article" date="2007" name="J. Bacteriol.">
        <title>The complete genome sequence of Campylobacter jejuni strain 81116 (NCTC11828).</title>
        <authorList>
            <person name="Pearson B.M."/>
            <person name="Gaskin D.J.H."/>
            <person name="Segers R.P.A.M."/>
            <person name="Wells J.M."/>
            <person name="Nuijten P.J.M."/>
            <person name="van Vliet A.H.M."/>
        </authorList>
    </citation>
    <scope>NUCLEOTIDE SEQUENCE [LARGE SCALE GENOMIC DNA]</scope>
    <source>
        <strain>81116 / NCTC 11828</strain>
    </source>
</reference>
<organism>
    <name type="scientific">Campylobacter jejuni subsp. jejuni serotype O:6 (strain 81116 / NCTC 11828)</name>
    <dbReference type="NCBI Taxonomy" id="407148"/>
    <lineage>
        <taxon>Bacteria</taxon>
        <taxon>Pseudomonadati</taxon>
        <taxon>Campylobacterota</taxon>
        <taxon>Epsilonproteobacteria</taxon>
        <taxon>Campylobacterales</taxon>
        <taxon>Campylobacteraceae</taxon>
        <taxon>Campylobacter</taxon>
    </lineage>
</organism>
<dbReference type="EC" id="2.1.2.9" evidence="1"/>
<dbReference type="EMBL" id="CP000814">
    <property type="protein sequence ID" value="ABV51690.1"/>
    <property type="molecule type" value="Genomic_DNA"/>
</dbReference>
<dbReference type="RefSeq" id="WP_002866723.1">
    <property type="nucleotide sequence ID" value="NC_009839.1"/>
</dbReference>
<dbReference type="SMR" id="A8FJQ3"/>
<dbReference type="KEGG" id="cju:C8J_0091"/>
<dbReference type="HOGENOM" id="CLU_033347_1_1_7"/>
<dbReference type="GO" id="GO:0005829">
    <property type="term" value="C:cytosol"/>
    <property type="evidence" value="ECO:0007669"/>
    <property type="project" value="TreeGrafter"/>
</dbReference>
<dbReference type="GO" id="GO:0004479">
    <property type="term" value="F:methionyl-tRNA formyltransferase activity"/>
    <property type="evidence" value="ECO:0007669"/>
    <property type="project" value="UniProtKB-UniRule"/>
</dbReference>
<dbReference type="CDD" id="cd08646">
    <property type="entry name" value="FMT_core_Met-tRNA-FMT_N"/>
    <property type="match status" value="1"/>
</dbReference>
<dbReference type="CDD" id="cd08704">
    <property type="entry name" value="Met_tRNA_FMT_C"/>
    <property type="match status" value="1"/>
</dbReference>
<dbReference type="Gene3D" id="3.40.50.12230">
    <property type="match status" value="1"/>
</dbReference>
<dbReference type="HAMAP" id="MF_00182">
    <property type="entry name" value="Formyl_trans"/>
    <property type="match status" value="1"/>
</dbReference>
<dbReference type="InterPro" id="IPR005794">
    <property type="entry name" value="Fmt"/>
</dbReference>
<dbReference type="InterPro" id="IPR005793">
    <property type="entry name" value="Formyl_trans_C"/>
</dbReference>
<dbReference type="InterPro" id="IPR002376">
    <property type="entry name" value="Formyl_transf_N"/>
</dbReference>
<dbReference type="InterPro" id="IPR036477">
    <property type="entry name" value="Formyl_transf_N_sf"/>
</dbReference>
<dbReference type="InterPro" id="IPR011034">
    <property type="entry name" value="Formyl_transferase-like_C_sf"/>
</dbReference>
<dbReference type="InterPro" id="IPR001555">
    <property type="entry name" value="GART_AS"/>
</dbReference>
<dbReference type="InterPro" id="IPR044135">
    <property type="entry name" value="Met-tRNA-FMT_C"/>
</dbReference>
<dbReference type="InterPro" id="IPR041711">
    <property type="entry name" value="Met-tRNA-FMT_N"/>
</dbReference>
<dbReference type="NCBIfam" id="TIGR00460">
    <property type="entry name" value="fmt"/>
    <property type="match status" value="1"/>
</dbReference>
<dbReference type="PANTHER" id="PTHR11138">
    <property type="entry name" value="METHIONYL-TRNA FORMYLTRANSFERASE"/>
    <property type="match status" value="1"/>
</dbReference>
<dbReference type="PANTHER" id="PTHR11138:SF5">
    <property type="entry name" value="METHIONYL-TRNA FORMYLTRANSFERASE, MITOCHONDRIAL"/>
    <property type="match status" value="1"/>
</dbReference>
<dbReference type="Pfam" id="PF02911">
    <property type="entry name" value="Formyl_trans_C"/>
    <property type="match status" value="1"/>
</dbReference>
<dbReference type="Pfam" id="PF00551">
    <property type="entry name" value="Formyl_trans_N"/>
    <property type="match status" value="1"/>
</dbReference>
<dbReference type="SUPFAM" id="SSF50486">
    <property type="entry name" value="FMT C-terminal domain-like"/>
    <property type="match status" value="1"/>
</dbReference>
<dbReference type="SUPFAM" id="SSF53328">
    <property type="entry name" value="Formyltransferase"/>
    <property type="match status" value="1"/>
</dbReference>
<dbReference type="PROSITE" id="PS00373">
    <property type="entry name" value="GART"/>
    <property type="match status" value="1"/>
</dbReference>
<feature type="chain" id="PRO_1000071659" description="Methionyl-tRNA formyltransferase">
    <location>
        <begin position="1"/>
        <end position="305"/>
    </location>
</feature>
<feature type="binding site" evidence="1">
    <location>
        <begin position="111"/>
        <end position="114"/>
    </location>
    <ligand>
        <name>(6S)-5,6,7,8-tetrahydrofolate</name>
        <dbReference type="ChEBI" id="CHEBI:57453"/>
    </ligand>
</feature>
<gene>
    <name evidence="1" type="primary">fmt</name>
    <name type="ordered locus">C8J_0091</name>
</gene>
<comment type="function">
    <text evidence="1">Attaches a formyl group to the free amino group of methionyl-tRNA(fMet). The formyl group appears to play a dual role in the initiator identity of N-formylmethionyl-tRNA by promoting its recognition by IF2 and preventing the misappropriation of this tRNA by the elongation apparatus.</text>
</comment>
<comment type="catalytic activity">
    <reaction evidence="1">
        <text>L-methionyl-tRNA(fMet) + (6R)-10-formyltetrahydrofolate = N-formyl-L-methionyl-tRNA(fMet) + (6S)-5,6,7,8-tetrahydrofolate + H(+)</text>
        <dbReference type="Rhea" id="RHEA:24380"/>
        <dbReference type="Rhea" id="RHEA-COMP:9952"/>
        <dbReference type="Rhea" id="RHEA-COMP:9953"/>
        <dbReference type="ChEBI" id="CHEBI:15378"/>
        <dbReference type="ChEBI" id="CHEBI:57453"/>
        <dbReference type="ChEBI" id="CHEBI:78530"/>
        <dbReference type="ChEBI" id="CHEBI:78844"/>
        <dbReference type="ChEBI" id="CHEBI:195366"/>
        <dbReference type="EC" id="2.1.2.9"/>
    </reaction>
</comment>
<comment type="similarity">
    <text evidence="1">Belongs to the Fmt family.</text>
</comment>
<protein>
    <recommendedName>
        <fullName evidence="1">Methionyl-tRNA formyltransferase</fullName>
        <ecNumber evidence="1">2.1.2.9</ecNumber>
    </recommendedName>
</protein>